<proteinExistence type="evidence at protein level"/>
<dbReference type="EMBL" id="U00096">
    <property type="protein sequence ID" value="AYC08178.1"/>
    <property type="molecule type" value="Genomic_DNA"/>
</dbReference>
<dbReference type="SMR" id="P0DPN2"/>
<dbReference type="EnsemblBacteria" id="AYC08178">
    <property type="protein sequence ID" value="AYC08178"/>
    <property type="gene ID" value="b4732"/>
</dbReference>
<dbReference type="InParanoid" id="P0DPN2"/>
<dbReference type="BioCyc" id="EcoCyc:MONOMER0-4409"/>
<dbReference type="PRO" id="PR:P0DPN2"/>
<dbReference type="Proteomes" id="UP000000625">
    <property type="component" value="Chromosome"/>
</dbReference>
<dbReference type="Pfam" id="PF23687">
    <property type="entry name" value="YkiD"/>
    <property type="match status" value="1"/>
</dbReference>
<organism>
    <name type="scientific">Escherichia coli (strain K12)</name>
    <dbReference type="NCBI Taxonomy" id="83333"/>
    <lineage>
        <taxon>Bacteria</taxon>
        <taxon>Pseudomonadati</taxon>
        <taxon>Pseudomonadota</taxon>
        <taxon>Gammaproteobacteria</taxon>
        <taxon>Enterobacterales</taxon>
        <taxon>Enterobacteriaceae</taxon>
        <taxon>Escherichia</taxon>
    </lineage>
</organism>
<name>YKID_ECOLI</name>
<keyword id="KW-1185">Reference proteome</keyword>
<reference key="1">
    <citation type="journal article" date="1997" name="Science">
        <title>The complete genome sequence of Escherichia coli K-12.</title>
        <authorList>
            <person name="Blattner F.R."/>
            <person name="Plunkett G. III"/>
            <person name="Bloch C.A."/>
            <person name="Perna N.T."/>
            <person name="Burland V."/>
            <person name="Riley M."/>
            <person name="Collado-Vides J."/>
            <person name="Glasner J.D."/>
            <person name="Rode C.K."/>
            <person name="Mayhew G.F."/>
            <person name="Gregor J."/>
            <person name="Davis N.W."/>
            <person name="Kirkpatrick H.A."/>
            <person name="Goeden M.A."/>
            <person name="Rose D.J."/>
            <person name="Mau B."/>
            <person name="Shao Y."/>
        </authorList>
    </citation>
    <scope>NUCLEOTIDE SEQUENCE [LARGE SCALE GENOMIC DNA]</scope>
    <source>
        <strain>K12 / MG1655 / ATCC 47076</strain>
    </source>
</reference>
<reference key="2">
    <citation type="journal article" date="2018" name="Proteomics">
        <title>Identifying new small proteins in Escherichia coli.</title>
        <authorList>
            <person name="VanOrsdel C.E."/>
            <person name="Kelly J.P."/>
            <person name="Burke B.N."/>
            <person name="Lein C.D."/>
            <person name="Oufiero C.E."/>
            <person name="Sanchez J.F."/>
            <person name="Wimmers L.E."/>
            <person name="Hearn D.J."/>
            <person name="Abuikhdair F.J."/>
            <person name="Barnhart K.R."/>
            <person name="Duley M.L."/>
            <person name="Ernst S.E.G."/>
            <person name="Kenerson B.A."/>
            <person name="Serafin A.J."/>
            <person name="Hemm M.R."/>
        </authorList>
    </citation>
    <scope>IDENTIFICATION</scope>
    <scope>INDUCTION</scope>
</reference>
<evidence type="ECO:0000269" key="1">
    <source>
    </source>
</evidence>
<evidence type="ECO:0000303" key="2">
    <source>
    </source>
</evidence>
<feature type="chain" id="PRO_0000445160" description="Protein YkiD">
    <location>
        <begin position="1"/>
        <end position="27"/>
    </location>
</feature>
<gene>
    <name evidence="2" type="primary">ykiD</name>
    <name type="ordered locus">b4732</name>
</gene>
<comment type="induction">
    <text evidence="1">Expressed approximately equally in exponential and stationary phases (at protein level).</text>
</comment>
<accession>P0DPN2</accession>
<accession>A0A385XJA2</accession>
<protein>
    <recommendedName>
        <fullName evidence="2">Protein YkiD</fullName>
    </recommendedName>
</protein>
<sequence>MTQRPWSKLQRKTHNIAALKIIARRSE</sequence>